<reference key="1">
    <citation type="journal article" date="2000" name="J. Biol. Chem.">
        <title>Molecular cloning and expression of cDNA encoding chicken UDP-N-acetyl-D-glucosamine (GlcNAc): GlcNAcbeta 1-6(GlcNAcbeta 1-2)-manalpha 1-R[GlcNAc to man]beta 1,4N-acetylglucosaminyltransferase VI.</title>
        <authorList>
            <person name="Sakamoto Y."/>
            <person name="Taguchi T."/>
            <person name="Honke K."/>
            <person name="Korekane H."/>
            <person name="Watanabe H."/>
            <person name="Tano Y."/>
            <person name="Dohmae N."/>
            <person name="Takio K."/>
            <person name="Horii A."/>
            <person name="Taniguchi N."/>
        </authorList>
    </citation>
    <scope>NUCLEOTIDE SEQUENCE [MRNA]</scope>
    <scope>PROTEIN SEQUENCE OF 85-107; 173-183; 358-384 AND 422-431</scope>
    <scope>FUNCTION</scope>
    <scope>ENZYME ACTIVITY</scope>
    <scope>TISSUE SPECIFICITY</scope>
</reference>
<reference key="2">
    <citation type="journal article" date="2000" name="J. Biol. Chem.">
        <title>Purification and characterization of UDP-GlcNAc: GlcNAcbeta 1-6(GlcNAcbeta 1-2)Manalpha 1-R [GlcNAc to Man]-beta 1, 4-N-acetylglucosaminyltransferase VI from hen oviduct.</title>
        <authorList>
            <person name="Taguchi T."/>
            <person name="Ogawa T."/>
            <person name="Inoue S."/>
            <person name="Inoue Y."/>
            <person name="Sakamoto Y."/>
            <person name="Korekane H."/>
            <person name="Taniguchi N."/>
        </authorList>
    </citation>
    <scope>IDENTIFICATION</scope>
    <scope>COFACTOR</scope>
</reference>
<reference key="3">
    <citation type="journal article" date="2006" name="Glycobiology">
        <title>A specific detection of GlcNAcbeta1-6Manalpha1 branches in N-linked glycoproteins based on the specificity of N-acetylglucosaminyltransferase VI.</title>
        <authorList>
            <person name="Watanabe T."/>
            <person name="Ihara H."/>
            <person name="Miyoshi E."/>
            <person name="Honke K."/>
            <person name="Taniguchi N."/>
            <person name="Taguchi T."/>
        </authorList>
    </citation>
    <scope>ENZYME ACTIVITY</scope>
</reference>
<protein>
    <recommendedName>
        <fullName>Alpha-1,6-mannosyl-glycoprotein 4-beta-N-acetylglucosaminyltransferase</fullName>
        <ecNumber evidence="4 5">2.4.1.201</ecNumber>
    </recommendedName>
    <alternativeName>
        <fullName>N-acetylglucosaminyltransferase VI</fullName>
        <shortName>GnT-VI</shortName>
    </alternativeName>
</protein>
<feature type="chain" id="PRO_0000288600" description="Alpha-1,6-mannosyl-glycoprotein 4-beta-N-acetylglucosaminyltransferase">
    <location>
        <begin position="1"/>
        <end position="464"/>
    </location>
</feature>
<feature type="topological domain" description="Cytoplasmic" evidence="2">
    <location>
        <begin position="1"/>
        <end position="10"/>
    </location>
</feature>
<feature type="transmembrane region" description="Helical; Signal-anchor for type II membrane protein" evidence="2">
    <location>
        <begin position="11"/>
        <end position="31"/>
    </location>
</feature>
<feature type="topological domain" description="Lumenal" evidence="2">
    <location>
        <begin position="32"/>
        <end position="464"/>
    </location>
</feature>
<feature type="glycosylation site" description="N-linked (GlcNAc...) asparagine" evidence="2">
    <location>
        <position position="70"/>
    </location>
</feature>
<feature type="glycosylation site" description="N-linked (GlcNAc...) asparagine" evidence="2">
    <location>
        <position position="201"/>
    </location>
</feature>
<dbReference type="EC" id="2.4.1.201" evidence="4 5"/>
<dbReference type="EMBL" id="AB040608">
    <property type="protein sequence ID" value="BAB16845.1"/>
    <property type="molecule type" value="mRNA"/>
</dbReference>
<dbReference type="RefSeq" id="NP_990012.1">
    <property type="nucleotide sequence ID" value="NM_204681.2"/>
</dbReference>
<dbReference type="SMR" id="Q9DGD1"/>
<dbReference type="FunCoup" id="Q9DGD1">
    <property type="interactions" value="26"/>
</dbReference>
<dbReference type="STRING" id="9031.ENSGALP00000066730"/>
<dbReference type="CAZy" id="GT54">
    <property type="family name" value="Glycosyltransferase Family 54"/>
</dbReference>
<dbReference type="GlyCosmos" id="Q9DGD1">
    <property type="glycosylation" value="2 sites, No reported glycans"/>
</dbReference>
<dbReference type="GlyGen" id="Q9DGD1">
    <property type="glycosylation" value="2 sites"/>
</dbReference>
<dbReference type="PaxDb" id="9031-ENSGALP00000000302"/>
<dbReference type="GeneID" id="395415"/>
<dbReference type="KEGG" id="gga:395415"/>
<dbReference type="CTD" id="240755"/>
<dbReference type="VEuPathDB" id="HostDB:geneid_395415"/>
<dbReference type="eggNOG" id="KOG3656">
    <property type="taxonomic scope" value="Eukaryota"/>
</dbReference>
<dbReference type="InParanoid" id="Q9DGD1"/>
<dbReference type="OrthoDB" id="2016523at2759"/>
<dbReference type="PhylomeDB" id="Q9DGD1"/>
<dbReference type="BioCyc" id="MetaCyc:MONOMER-20297"/>
<dbReference type="BRENDA" id="2.4.1.201">
    <property type="organism ID" value="1306"/>
</dbReference>
<dbReference type="UniPathway" id="UPA00378"/>
<dbReference type="PRO" id="PR:Q9DGD1"/>
<dbReference type="Proteomes" id="UP000000539">
    <property type="component" value="Unassembled WGS sequence"/>
</dbReference>
<dbReference type="GO" id="GO:0000139">
    <property type="term" value="C:Golgi membrane"/>
    <property type="evidence" value="ECO:0007669"/>
    <property type="project" value="UniProtKB-SubCell"/>
</dbReference>
<dbReference type="GO" id="GO:0008375">
    <property type="term" value="F:acetylglucosaminyltransferase activity"/>
    <property type="evidence" value="ECO:0000318"/>
    <property type="project" value="GO_Central"/>
</dbReference>
<dbReference type="GO" id="GO:0047253">
    <property type="term" value="F:alpha-1,6-mannosylglycoprotein 4-beta-N-acetylglucosaminyltransferase activity"/>
    <property type="evidence" value="ECO:0007669"/>
    <property type="project" value="UniProtKB-EC"/>
</dbReference>
<dbReference type="GO" id="GO:0046872">
    <property type="term" value="F:metal ion binding"/>
    <property type="evidence" value="ECO:0007669"/>
    <property type="project" value="UniProtKB-KW"/>
</dbReference>
<dbReference type="GO" id="GO:0006487">
    <property type="term" value="P:protein N-linked glycosylation"/>
    <property type="evidence" value="ECO:0000318"/>
    <property type="project" value="GO_Central"/>
</dbReference>
<dbReference type="InterPro" id="IPR006759">
    <property type="entry name" value="Glyco_transf_54"/>
</dbReference>
<dbReference type="InterPro" id="IPR056576">
    <property type="entry name" value="MGAT4_A/B/C_C"/>
</dbReference>
<dbReference type="PANTHER" id="PTHR12062:SF11">
    <property type="entry name" value="ALPHA-1,3-MANNOSYL-GLYCOPROTEIN 4-BETA-N-ACETYLGLUCOSAMINYLTRANSFERASE-LIKE PROTEIN MGAT4E"/>
    <property type="match status" value="1"/>
</dbReference>
<dbReference type="PANTHER" id="PTHR12062">
    <property type="entry name" value="N-ACETYLGLUCOSAMINYLTRANSFERASE VI"/>
    <property type="match status" value="1"/>
</dbReference>
<dbReference type="Pfam" id="PF04666">
    <property type="entry name" value="MGAT4_cons"/>
    <property type="match status" value="1"/>
</dbReference>
<dbReference type="Pfam" id="PF23524">
    <property type="entry name" value="MGAT4A_C"/>
    <property type="match status" value="1"/>
</dbReference>
<keyword id="KW-0903">Direct protein sequencing</keyword>
<keyword id="KW-0325">Glycoprotein</keyword>
<keyword id="KW-0328">Glycosyltransferase</keyword>
<keyword id="KW-0333">Golgi apparatus</keyword>
<keyword id="KW-0472">Membrane</keyword>
<keyword id="KW-0479">Metal-binding</keyword>
<keyword id="KW-1185">Reference proteome</keyword>
<keyword id="KW-0735">Signal-anchor</keyword>
<keyword id="KW-0808">Transferase</keyword>
<keyword id="KW-0812">Transmembrane</keyword>
<keyword id="KW-1133">Transmembrane helix</keyword>
<gene>
    <name type="primary">MGAT4C</name>
</gene>
<name>MGT4C_CHICK</name>
<evidence type="ECO:0000250" key="1"/>
<evidence type="ECO:0000255" key="2"/>
<evidence type="ECO:0000269" key="3">
    <source>
    </source>
</evidence>
<evidence type="ECO:0000269" key="4">
    <source>
    </source>
</evidence>
<evidence type="ECO:0000269" key="5">
    <source>
    </source>
</evidence>
<evidence type="ECO:0000305" key="6"/>
<accession>Q9DGD1</accession>
<comment type="function">
    <text evidence="4">Glycosyltransferase that catalyzes the transfer of GlcNAc to the Manalpha1-6 arm to form GlcNAcBeta1-4Manalpha1-6 linkage (also named 'GnT-VI' activity). May also participate in the transfer of N-acetylglucosamine (GlcNAc) to the core mannose residues of N-linked glycans by catalyzing the formation of the GlcNAcbeta1-4 branch on the GlcNAcbeta1-2Manalpha1-3 arm of the core structure of N-linked glycans.</text>
</comment>
<comment type="catalytic activity">
    <reaction evidence="4 5">
        <text>N(4)-{beta-D-GlcNAc-(1-&gt;2)-[beta-D-GlcNAc-(1-&gt;4)]-alpha-D-Man-(1-&gt;3)-[beta-D-GlcNAc-(1-&gt;2)-[beta-D-GlcNAc-(1-&gt;6)]-alpha-D-Man-(1-&gt;6)]-beta-D-Man-(1-&gt;4)-beta-D-GlcNAc-(1-&gt;4)-beta-D-GlcNAc}-L-asparaginyl-[protein] + UDP-N-acetyl-alpha-D-glucosamine = N(4)-{beta-D-GlcNAc-(1-&gt;2)-[beta-D-GlcNAc-(1-&gt;4)]-alpha-D-Man-(1-&gt;3)-[beta-D-GlcNAc-(1-&gt;2)-[beta-D-GlcNAc-(1-&gt;4)]-[beta-D-GlcNAc-(1-&gt;6)]-alpha-D-Man-(1-&gt;6)]-beta-D-Man-(1-&gt;4)-beta-D-GlcNAc-(1-&gt;4)-beta-D-GlcNAc}-L-asparaginyl-[protein] + UDP + H(+)</text>
        <dbReference type="Rhea" id="RHEA:19945"/>
        <dbReference type="Rhea" id="RHEA-COMP:14377"/>
        <dbReference type="Rhea" id="RHEA-COMP:14384"/>
        <dbReference type="ChEBI" id="CHEBI:15378"/>
        <dbReference type="ChEBI" id="CHEBI:57705"/>
        <dbReference type="ChEBI" id="CHEBI:58223"/>
        <dbReference type="ChEBI" id="CHEBI:139510"/>
        <dbReference type="ChEBI" id="CHEBI:139513"/>
        <dbReference type="EC" id="2.4.1.201"/>
    </reaction>
</comment>
<comment type="cofactor">
    <cofactor evidence="3">
        <name>a divalent metal cation</name>
        <dbReference type="ChEBI" id="CHEBI:60240"/>
    </cofactor>
</comment>
<comment type="pathway">
    <text>Protein modification; protein glycosylation.</text>
</comment>
<comment type="subcellular location">
    <subcellularLocation>
        <location evidence="1">Golgi apparatus membrane</location>
        <topology evidence="1">Single-pass type II membrane protein</topology>
    </subcellularLocation>
</comment>
<comment type="tissue specificity">
    <text evidence="4">Highly expressed in oviduct, spleen, lung and colon.</text>
</comment>
<comment type="similarity">
    <text evidence="6">Belongs to the glycosyltransferase 54 family.</text>
</comment>
<sequence length="464" mass="52820">MRCSPKRSLTAVIAASFLLLLLLLLLHRGSWQDPQEVQFRDLPSDAVLKILKQGSLHILQDTDNLCALHNISYHLLAGSPLPHKKFLAVGLSSVRRPRGYYLPDTLQSLFKQSSEEELQEMVVVVHLADADPIWNAQVAADISHRFAHHILLGRLVLIHTPHEFYPTLEGLKRNYNDPEERVKFRSKQNVDYAFLFTFAANLSSYYLMIEDDVWSAKSFFTAIRKAVASQEGSNWATLEFSKLGYIGKLYRSSDLPRLARFLLLFYQEMPCDWLLTHFRLLLTQKDVIRFKPSLFQHMGLYSSFQGTVNRLEDDEFQADAMDLPDNPPAALFTNMVVFENYEPSKAYSTARGYFWGKNPAVGSIFSIVFHQPARVTRVRVQTGSSERPGDFLHAGVLELGRGRRADGRDCSVYTTVGTFEKGNLEWRGLEKGMPNPVECVRIRVTQSQSEWLIIQSIGIWTAGT</sequence>
<organism>
    <name type="scientific">Gallus gallus</name>
    <name type="common">Chicken</name>
    <dbReference type="NCBI Taxonomy" id="9031"/>
    <lineage>
        <taxon>Eukaryota</taxon>
        <taxon>Metazoa</taxon>
        <taxon>Chordata</taxon>
        <taxon>Craniata</taxon>
        <taxon>Vertebrata</taxon>
        <taxon>Euteleostomi</taxon>
        <taxon>Archelosauria</taxon>
        <taxon>Archosauria</taxon>
        <taxon>Dinosauria</taxon>
        <taxon>Saurischia</taxon>
        <taxon>Theropoda</taxon>
        <taxon>Coelurosauria</taxon>
        <taxon>Aves</taxon>
        <taxon>Neognathae</taxon>
        <taxon>Galloanserae</taxon>
        <taxon>Galliformes</taxon>
        <taxon>Phasianidae</taxon>
        <taxon>Phasianinae</taxon>
        <taxon>Gallus</taxon>
    </lineage>
</organism>
<proteinExistence type="evidence at protein level"/>